<reference key="1">
    <citation type="journal article" date="2004" name="Genome Res.">
        <title>The status, quality, and expansion of the NIH full-length cDNA project: the Mammalian Gene Collection (MGC).</title>
        <authorList>
            <consortium name="The MGC Project Team"/>
        </authorList>
    </citation>
    <scope>NUCLEOTIDE SEQUENCE [LARGE SCALE MRNA]</scope>
    <source>
        <tissue>Lung</tissue>
    </source>
</reference>
<sequence>MNLFRFLGDLSHLLAIILLLLKIWKSRSCAGISGKSQVLFAVVFTARYLDLFTNYISLYNTCMKVVYIACSFTTVWMIYSKFKATYDGNHDTFRVEFLVVPTAVLAFLVNHDFTPLEILWTFSIYLESVAILPQLFMVSKTGEAETITSHYLFALGVYRTLYLFNWIWRYHFEGFFDLIAIVAGLVQTVLYCDFFYLYITKVLKGKKLSLPA</sequence>
<proteinExistence type="evidence at transcript level"/>
<dbReference type="EMBL" id="BC092600">
    <property type="protein sequence ID" value="AAH92600.1"/>
    <property type="molecule type" value="mRNA"/>
</dbReference>
<dbReference type="RefSeq" id="NP_001017385.1">
    <property type="nucleotide sequence ID" value="NM_001017385.1"/>
</dbReference>
<dbReference type="SMR" id="Q569A6"/>
<dbReference type="FunCoup" id="Q569A6">
    <property type="interactions" value="1986"/>
</dbReference>
<dbReference type="IntAct" id="Q569A6">
    <property type="interactions" value="1"/>
</dbReference>
<dbReference type="STRING" id="10116.ENSRNOP00000028627"/>
<dbReference type="PhosphoSitePlus" id="Q569A6"/>
<dbReference type="PaxDb" id="10116-ENSRNOP00000028627"/>
<dbReference type="Ensembl" id="ENSRNOT00000028627.5">
    <property type="protein sequence ID" value="ENSRNOP00000028627.3"/>
    <property type="gene ID" value="ENSRNOG00000021082.5"/>
</dbReference>
<dbReference type="GeneID" id="361577"/>
<dbReference type="KEGG" id="rno:361577"/>
<dbReference type="UCSC" id="RGD:1306764">
    <property type="organism name" value="rat"/>
</dbReference>
<dbReference type="AGR" id="RGD:1306764"/>
<dbReference type="CTD" id="10945"/>
<dbReference type="RGD" id="1306764">
    <property type="gene designation" value="Kdelr1"/>
</dbReference>
<dbReference type="eggNOG" id="KOG3106">
    <property type="taxonomic scope" value="Eukaryota"/>
</dbReference>
<dbReference type="GeneTree" id="ENSGT00390000004010"/>
<dbReference type="HOGENOM" id="CLU_057784_0_0_1"/>
<dbReference type="InParanoid" id="Q569A6"/>
<dbReference type="OMA" id="YAEDHYD"/>
<dbReference type="OrthoDB" id="7694678at2759"/>
<dbReference type="PhylomeDB" id="Q569A6"/>
<dbReference type="TreeFam" id="TF314792"/>
<dbReference type="Reactome" id="R-RNO-6807878">
    <property type="pathway name" value="COPI-mediated anterograde transport"/>
</dbReference>
<dbReference type="Reactome" id="R-RNO-6811434">
    <property type="pathway name" value="COPI-dependent Golgi-to-ER retrograde traffic"/>
</dbReference>
<dbReference type="PRO" id="PR:Q569A6"/>
<dbReference type="Proteomes" id="UP000002494">
    <property type="component" value="Chromosome 1"/>
</dbReference>
<dbReference type="Bgee" id="ENSRNOG00000021082">
    <property type="expression patterns" value="Expressed in pancreas and 20 other cell types or tissues"/>
</dbReference>
<dbReference type="GO" id="GO:0005801">
    <property type="term" value="C:cis-Golgi network"/>
    <property type="evidence" value="ECO:0000314"/>
    <property type="project" value="MGI"/>
</dbReference>
<dbReference type="GO" id="GO:0030663">
    <property type="term" value="C:COPI-coated vesicle membrane"/>
    <property type="evidence" value="ECO:0000266"/>
    <property type="project" value="RGD"/>
</dbReference>
<dbReference type="GO" id="GO:0005783">
    <property type="term" value="C:endoplasmic reticulum"/>
    <property type="evidence" value="ECO:0000314"/>
    <property type="project" value="MGI"/>
</dbReference>
<dbReference type="GO" id="GO:0005789">
    <property type="term" value="C:endoplasmic reticulum membrane"/>
    <property type="evidence" value="ECO:0000266"/>
    <property type="project" value="RGD"/>
</dbReference>
<dbReference type="GO" id="GO:0005793">
    <property type="term" value="C:endoplasmic reticulum-Golgi intermediate compartment"/>
    <property type="evidence" value="ECO:0000266"/>
    <property type="project" value="RGD"/>
</dbReference>
<dbReference type="GO" id="GO:0033116">
    <property type="term" value="C:endoplasmic reticulum-Golgi intermediate compartment membrane"/>
    <property type="evidence" value="ECO:0007669"/>
    <property type="project" value="UniProtKB-SubCell"/>
</dbReference>
<dbReference type="GO" id="GO:0005794">
    <property type="term" value="C:Golgi apparatus"/>
    <property type="evidence" value="ECO:0000266"/>
    <property type="project" value="RGD"/>
</dbReference>
<dbReference type="GO" id="GO:0000139">
    <property type="term" value="C:Golgi membrane"/>
    <property type="evidence" value="ECO:0000250"/>
    <property type="project" value="UniProtKB"/>
</dbReference>
<dbReference type="GO" id="GO:0046923">
    <property type="term" value="F:ER retention sequence binding"/>
    <property type="evidence" value="ECO:0000318"/>
    <property type="project" value="GO_Central"/>
</dbReference>
<dbReference type="GO" id="GO:0005046">
    <property type="term" value="F:KDEL sequence binding"/>
    <property type="evidence" value="ECO:0000250"/>
    <property type="project" value="UniProtKB"/>
</dbReference>
<dbReference type="GO" id="GO:0006621">
    <property type="term" value="P:protein retention in ER lumen"/>
    <property type="evidence" value="ECO:0000318"/>
    <property type="project" value="GO_Central"/>
</dbReference>
<dbReference type="GO" id="GO:0015031">
    <property type="term" value="P:protein transport"/>
    <property type="evidence" value="ECO:0007669"/>
    <property type="project" value="UniProtKB-KW"/>
</dbReference>
<dbReference type="GO" id="GO:0006890">
    <property type="term" value="P:retrograde vesicle-mediated transport, Golgi to endoplasmic reticulum"/>
    <property type="evidence" value="ECO:0000250"/>
    <property type="project" value="UniProtKB"/>
</dbReference>
<dbReference type="GO" id="GO:0070231">
    <property type="term" value="P:T cell apoptotic process"/>
    <property type="evidence" value="ECO:0000266"/>
    <property type="project" value="RGD"/>
</dbReference>
<dbReference type="GO" id="GO:0030217">
    <property type="term" value="P:T cell differentiation"/>
    <property type="evidence" value="ECO:0000266"/>
    <property type="project" value="RGD"/>
</dbReference>
<dbReference type="InterPro" id="IPR000133">
    <property type="entry name" value="ER_ret_rcpt"/>
</dbReference>
<dbReference type="PANTHER" id="PTHR10585">
    <property type="entry name" value="ER LUMEN PROTEIN RETAINING RECEPTOR"/>
    <property type="match status" value="1"/>
</dbReference>
<dbReference type="Pfam" id="PF00810">
    <property type="entry name" value="ER_lumen_recept"/>
    <property type="match status" value="1"/>
</dbReference>
<dbReference type="PRINTS" id="PR00660">
    <property type="entry name" value="ERLUMENR"/>
</dbReference>
<dbReference type="PROSITE" id="PS00951">
    <property type="entry name" value="ER_LUMEN_RECEPTOR_1"/>
    <property type="match status" value="1"/>
</dbReference>
<dbReference type="PROSITE" id="PS00952">
    <property type="entry name" value="ER_LUMEN_RECEPTOR_2"/>
    <property type="match status" value="1"/>
</dbReference>
<protein>
    <recommendedName>
        <fullName>ER lumen protein-retaining receptor 1</fullName>
    </recommendedName>
    <alternativeName>
        <fullName>KDEL endoplasmic reticulum protein retention receptor 1</fullName>
        <shortName>KDEL receptor 1</shortName>
    </alternativeName>
</protein>
<gene>
    <name type="primary">Kdelr1</name>
</gene>
<evidence type="ECO:0000250" key="1"/>
<evidence type="ECO:0000250" key="2">
    <source>
        <dbReference type="UniProtKB" id="P24390"/>
    </source>
</evidence>
<evidence type="ECO:0000250" key="3">
    <source>
        <dbReference type="UniProtKB" id="P33946"/>
    </source>
</evidence>
<evidence type="ECO:0000250" key="4">
    <source>
        <dbReference type="UniProtKB" id="P33947"/>
    </source>
</evidence>
<evidence type="ECO:0000250" key="5">
    <source>
        <dbReference type="UniProtKB" id="Q5ZKX9"/>
    </source>
</evidence>
<evidence type="ECO:0000305" key="6"/>
<comment type="function">
    <text evidence="2">Receptor for the C-terminal sequence motif K-D-E-L that is present on endoplasmic reticulum resident proteins and that mediates their recycling from the Golgi back to the endoplasmic reticulum.</text>
</comment>
<comment type="subunit">
    <text evidence="1">Upon ligand binding the receptor oligomerizes and interacts with components of the transport machinery such as ARFGAP1 and ARF1.</text>
</comment>
<comment type="subcellular location">
    <subcellularLocation>
        <location evidence="3">Golgi apparatus membrane</location>
        <topology evidence="3">Multi-pass membrane protein</topology>
    </subcellularLocation>
    <subcellularLocation>
        <location evidence="3">Cytoplasmic vesicle</location>
        <location evidence="3">COPI-coated vesicle membrane</location>
        <topology evidence="3">Multi-pass membrane protein</topology>
    </subcellularLocation>
    <subcellularLocation>
        <location evidence="3">Endoplasmic reticulum membrane</location>
        <topology evidence="3">Multi-pass membrane protein</topology>
    </subcellularLocation>
    <subcellularLocation>
        <location evidence="3">Endoplasmic reticulum-Golgi intermediate compartment membrane</location>
        <topology evidence="3">Multi-pass membrane protein</topology>
    </subcellularLocation>
    <text evidence="3">Localized in the Golgi in the absence of bound proteins with the sequence motif K-D-E-L. Trafficks back to the endoplasmic reticulum together with cargo proteins containing the sequence motif K-D-E-L.</text>
</comment>
<comment type="PTM">
    <text evidence="2">Phosphorylation by PKA at Ser-209 is required for endoplasmic reticulum retention function.</text>
</comment>
<comment type="similarity">
    <text evidence="6">Belongs to the ERD2 family.</text>
</comment>
<organism>
    <name type="scientific">Rattus norvegicus</name>
    <name type="common">Rat</name>
    <dbReference type="NCBI Taxonomy" id="10116"/>
    <lineage>
        <taxon>Eukaryota</taxon>
        <taxon>Metazoa</taxon>
        <taxon>Chordata</taxon>
        <taxon>Craniata</taxon>
        <taxon>Vertebrata</taxon>
        <taxon>Euteleostomi</taxon>
        <taxon>Mammalia</taxon>
        <taxon>Eutheria</taxon>
        <taxon>Euarchontoglires</taxon>
        <taxon>Glires</taxon>
        <taxon>Rodentia</taxon>
        <taxon>Myomorpha</taxon>
        <taxon>Muroidea</taxon>
        <taxon>Muridae</taxon>
        <taxon>Murinae</taxon>
        <taxon>Rattus</taxon>
    </lineage>
</organism>
<accession>Q569A6</accession>
<name>ERD21_RAT</name>
<feature type="chain" id="PRO_0000252343" description="ER lumen protein-retaining receptor 1">
    <location>
        <begin position="1"/>
        <end position="212"/>
    </location>
</feature>
<feature type="topological domain" description="Lumenal" evidence="6">
    <location>
        <begin position="1"/>
        <end position="4"/>
    </location>
</feature>
<feature type="transmembrane region" description="Helical" evidence="5">
    <location>
        <begin position="5"/>
        <end position="24"/>
    </location>
</feature>
<feature type="topological domain" description="Cytoplasmic" evidence="6">
    <location>
        <begin position="25"/>
        <end position="32"/>
    </location>
</feature>
<feature type="transmembrane region" description="Helical" evidence="5">
    <location>
        <begin position="33"/>
        <end position="52"/>
    </location>
</feature>
<feature type="topological domain" description="Lumenal" evidence="6">
    <location>
        <begin position="53"/>
        <end position="58"/>
    </location>
</feature>
<feature type="transmembrane region" description="Helical" evidence="5">
    <location>
        <begin position="59"/>
        <end position="79"/>
    </location>
</feature>
<feature type="topological domain" description="Cytoplasmic" evidence="6">
    <location>
        <begin position="80"/>
        <end position="92"/>
    </location>
</feature>
<feature type="transmembrane region" description="Helical" evidence="5">
    <location>
        <begin position="93"/>
        <end position="110"/>
    </location>
</feature>
<feature type="topological domain" description="Lumenal" evidence="6">
    <location>
        <begin position="111"/>
        <end position="116"/>
    </location>
</feature>
<feature type="transmembrane region" description="Helical" evidence="5">
    <location>
        <begin position="117"/>
        <end position="135"/>
    </location>
</feature>
<feature type="topological domain" description="Cytoplasmic" evidence="6">
    <location>
        <begin position="136"/>
        <end position="149"/>
    </location>
</feature>
<feature type="transmembrane region" description="Helical" evidence="5">
    <location>
        <begin position="150"/>
        <end position="168"/>
    </location>
</feature>
<feature type="topological domain" description="Lumenal" evidence="6">
    <location>
        <begin position="169"/>
        <end position="178"/>
    </location>
</feature>
<feature type="transmembrane region" description="Helical" evidence="5">
    <location>
        <begin position="179"/>
        <end position="199"/>
    </location>
</feature>
<feature type="topological domain" description="Cytoplasmic" evidence="6">
    <location>
        <begin position="200"/>
        <end position="212"/>
    </location>
</feature>
<feature type="region of interest" description="Interaction with the K-D-E-L motif on target proteins" evidence="5">
    <location>
        <begin position="47"/>
        <end position="48"/>
    </location>
</feature>
<feature type="region of interest" description="Interaction with the K-D-E-L motif on target proteins" evidence="5">
    <location>
        <begin position="159"/>
        <end position="169"/>
    </location>
</feature>
<feature type="region of interest" description="Important for recycling of cargo proteins with the sequence motif K-D-E-L from the Golgi to the endoplasmic reticulum" evidence="4">
    <location>
        <begin position="204"/>
        <end position="207"/>
    </location>
</feature>
<feature type="site" description="Interaction with the K-D-E-L motif on target proteins" evidence="5">
    <location>
        <position position="5"/>
    </location>
</feature>
<feature type="site" description="Interaction with the K-D-E-L motif on target proteins" evidence="5">
    <location>
        <position position="117"/>
    </location>
</feature>
<feature type="site" description="Important for recycling of cargo proteins with the sequence motif K-D-E-L from the Golgi to the endoplasmic reticulum" evidence="2">
    <location>
        <position position="193"/>
    </location>
</feature>
<feature type="modified residue" description="Phosphoserine; by PKA" evidence="2">
    <location>
        <position position="209"/>
    </location>
</feature>
<keyword id="KW-0968">Cytoplasmic vesicle</keyword>
<keyword id="KW-0256">Endoplasmic reticulum</keyword>
<keyword id="KW-0931">ER-Golgi transport</keyword>
<keyword id="KW-0333">Golgi apparatus</keyword>
<keyword id="KW-0472">Membrane</keyword>
<keyword id="KW-0597">Phosphoprotein</keyword>
<keyword id="KW-0653">Protein transport</keyword>
<keyword id="KW-0675">Receptor</keyword>
<keyword id="KW-1185">Reference proteome</keyword>
<keyword id="KW-0812">Transmembrane</keyword>
<keyword id="KW-1133">Transmembrane helix</keyword>
<keyword id="KW-0813">Transport</keyword>